<reference key="1">
    <citation type="journal article" date="1990" name="Nucleic Acids Res.">
        <title>The molecular cloning of the ovine gamma-interferon cDNA using the polymerase chain reaction.</title>
        <authorList>
            <person name="McInnes C.J."/>
            <person name="Logan M."/>
            <person name="Redmond J."/>
            <person name="Entrican G."/>
            <person name="Baird G.D."/>
        </authorList>
    </citation>
    <scope>NUCLEOTIDE SEQUENCE [MRNA]</scope>
</reference>
<reference key="2">
    <citation type="submission" date="2006-02" db="EMBL/GenBank/DDBJ databases">
        <title>Cloning and expression of ovine IFN gamma and its biological function.</title>
        <authorList>
            <person name="Xia L.B."/>
            <person name="Lian H.J."/>
            <person name="Bo X.W."/>
            <person name="Wang X.H."/>
        </authorList>
    </citation>
    <scope>NUCLEOTIDE SEQUENCE [MRNA]</scope>
</reference>
<protein>
    <recommendedName>
        <fullName>Interferon gamma</fullName>
        <shortName>IFN-gamma</shortName>
    </recommendedName>
</protein>
<proteinExistence type="evidence at transcript level"/>
<gene>
    <name type="primary">IFNG</name>
</gene>
<organism>
    <name type="scientific">Ovis aries</name>
    <name type="common">Sheep</name>
    <dbReference type="NCBI Taxonomy" id="9940"/>
    <lineage>
        <taxon>Eukaryota</taxon>
        <taxon>Metazoa</taxon>
        <taxon>Chordata</taxon>
        <taxon>Craniata</taxon>
        <taxon>Vertebrata</taxon>
        <taxon>Euteleostomi</taxon>
        <taxon>Mammalia</taxon>
        <taxon>Eutheria</taxon>
        <taxon>Laurasiatheria</taxon>
        <taxon>Artiodactyla</taxon>
        <taxon>Ruminantia</taxon>
        <taxon>Pecora</taxon>
        <taxon>Bovidae</taxon>
        <taxon>Caprinae</taxon>
        <taxon>Ovis</taxon>
    </lineage>
</organism>
<evidence type="ECO:0000250" key="1"/>
<evidence type="ECO:0000250" key="2">
    <source>
        <dbReference type="UniProtKB" id="P01579"/>
    </source>
</evidence>
<evidence type="ECO:0000250" key="3">
    <source>
        <dbReference type="UniProtKB" id="P01580"/>
    </source>
</evidence>
<evidence type="ECO:0000305" key="4"/>
<feature type="signal peptide" evidence="1">
    <location>
        <begin position="1"/>
        <end position="23"/>
    </location>
</feature>
<feature type="chain" id="PRO_0000016459" description="Interferon gamma">
    <location>
        <begin position="24"/>
        <end position="166"/>
    </location>
</feature>
<feature type="modified residue" description="Pyrrolidone carboxylic acid" evidence="2">
    <location>
        <position position="24"/>
    </location>
</feature>
<feature type="glycosylation site" description="N-linked (GlcNAc...) asparagine" evidence="1">
    <location>
        <position position="39"/>
    </location>
</feature>
<feature type="glycosylation site" description="N-linked (GlcNAc...) asparagine" evidence="1">
    <location>
        <position position="106"/>
    </location>
</feature>
<sequence>MKYTSSFLALLLCVLLGFSGSYGQGPFFKEIENLKEYFNASNPDVAKGGPLFSEILKNWKEESDKKIIQSQIVSFYFKLFENLKDNQVIQRSMDIIKQDMFQKFLNGSSEKLEDFKRLIQIPVDDLQIQRKAINELIKVMNDLSPKSNLRKRKRSQNLFRGRRASM</sequence>
<dbReference type="EMBL" id="X52640">
    <property type="protein sequence ID" value="CAA36862.1"/>
    <property type="molecule type" value="mRNA"/>
</dbReference>
<dbReference type="EMBL" id="DQ410715">
    <property type="protein sequence ID" value="ABD64367.1"/>
    <property type="molecule type" value="mRNA"/>
</dbReference>
<dbReference type="PIR" id="S12723">
    <property type="entry name" value="S12723"/>
</dbReference>
<dbReference type="RefSeq" id="NP_001009803.1">
    <property type="nucleotide sequence ID" value="NM_001009803.1"/>
</dbReference>
<dbReference type="SMR" id="P17773"/>
<dbReference type="STRING" id="9940.ENSOARP00000002060"/>
<dbReference type="GlyCosmos" id="P17773">
    <property type="glycosylation" value="2 sites, No reported glycans"/>
</dbReference>
<dbReference type="PaxDb" id="9940-ENSOARP00000002060"/>
<dbReference type="Ensembl" id="ENSOART00025011262">
    <property type="protein sequence ID" value="ENSOARP00025005611"/>
    <property type="gene ID" value="ENSOARG00025006813"/>
</dbReference>
<dbReference type="Ensembl" id="ENSOART00040003346">
    <property type="protein sequence ID" value="ENSOARP00040001592"/>
    <property type="gene ID" value="ENSOARG00040002141"/>
</dbReference>
<dbReference type="Ensembl" id="ENSOART00180012089">
    <property type="protein sequence ID" value="ENSOARP00180006422"/>
    <property type="gene ID" value="ENSOARG00180007285"/>
</dbReference>
<dbReference type="Ensembl" id="ENSOART00185010860">
    <property type="protein sequence ID" value="ENSOARP00185005327"/>
    <property type="gene ID" value="ENSOARG00185006718"/>
</dbReference>
<dbReference type="Ensembl" id="ENSOART00215069349">
    <property type="protein sequence ID" value="ENSOARP00215037147"/>
    <property type="gene ID" value="ENSOARG00215041096"/>
</dbReference>
<dbReference type="Ensembl" id="ENSOART00220004515">
    <property type="protein sequence ID" value="ENSOARP00220003094"/>
    <property type="gene ID" value="ENSOARG00220002458"/>
</dbReference>
<dbReference type="Ensembl" id="ENSOART00225094979">
    <property type="protein sequence ID" value="ENSOARP00225050644"/>
    <property type="gene ID" value="ENSOARG00225056792"/>
</dbReference>
<dbReference type="Ensembl" id="ENSOART00260008598">
    <property type="protein sequence ID" value="ENSOARP00260004413"/>
    <property type="gene ID" value="ENSOARG00260005253"/>
</dbReference>
<dbReference type="GeneID" id="443396"/>
<dbReference type="KEGG" id="oas:443396"/>
<dbReference type="CTD" id="3458"/>
<dbReference type="eggNOG" id="ENOG502SBGW">
    <property type="taxonomic scope" value="Eukaryota"/>
</dbReference>
<dbReference type="HOGENOM" id="CLU_135106_0_0_1"/>
<dbReference type="OMA" id="QIVSMYL"/>
<dbReference type="OrthoDB" id="9937106at2759"/>
<dbReference type="Proteomes" id="UP000002356">
    <property type="component" value="Chromosome 3"/>
</dbReference>
<dbReference type="Bgee" id="ENSOARG00000001958">
    <property type="expression patterns" value="Expressed in leukocyte and 8 other cell types or tissues"/>
</dbReference>
<dbReference type="GO" id="GO:0005615">
    <property type="term" value="C:extracellular space"/>
    <property type="evidence" value="ECO:0000314"/>
    <property type="project" value="AgBase"/>
</dbReference>
<dbReference type="GO" id="GO:0005125">
    <property type="term" value="F:cytokine activity"/>
    <property type="evidence" value="ECO:0007669"/>
    <property type="project" value="UniProtKB-KW"/>
</dbReference>
<dbReference type="GO" id="GO:0005133">
    <property type="term" value="F:type II interferon receptor binding"/>
    <property type="evidence" value="ECO:0007669"/>
    <property type="project" value="InterPro"/>
</dbReference>
<dbReference type="GO" id="GO:0002250">
    <property type="term" value="P:adaptive immune response"/>
    <property type="evidence" value="ECO:0007669"/>
    <property type="project" value="TreeGrafter"/>
</dbReference>
<dbReference type="GO" id="GO:0048143">
    <property type="term" value="P:astrocyte activation"/>
    <property type="evidence" value="ECO:0007669"/>
    <property type="project" value="Ensembl"/>
</dbReference>
<dbReference type="GO" id="GO:0097696">
    <property type="term" value="P:cell surface receptor signaling pathway via STAT"/>
    <property type="evidence" value="ECO:0007669"/>
    <property type="project" value="Ensembl"/>
</dbReference>
<dbReference type="GO" id="GO:0051607">
    <property type="term" value="P:defense response to virus"/>
    <property type="evidence" value="ECO:0007669"/>
    <property type="project" value="UniProtKB-KW"/>
</dbReference>
<dbReference type="GO" id="GO:0097191">
    <property type="term" value="P:extrinsic apoptotic signaling pathway"/>
    <property type="evidence" value="ECO:0007669"/>
    <property type="project" value="Ensembl"/>
</dbReference>
<dbReference type="GO" id="GO:0038096">
    <property type="term" value="P:Fc-gamma receptor signaling pathway involved in phagocytosis"/>
    <property type="evidence" value="ECO:0007669"/>
    <property type="project" value="Ensembl"/>
</dbReference>
<dbReference type="GO" id="GO:0006959">
    <property type="term" value="P:humoral immune response"/>
    <property type="evidence" value="ECO:0007669"/>
    <property type="project" value="TreeGrafter"/>
</dbReference>
<dbReference type="GO" id="GO:0002281">
    <property type="term" value="P:macrophage activation involved in immune response"/>
    <property type="evidence" value="ECO:0007669"/>
    <property type="project" value="Ensembl"/>
</dbReference>
<dbReference type="GO" id="GO:0030225">
    <property type="term" value="P:macrophage differentiation"/>
    <property type="evidence" value="ECO:0007669"/>
    <property type="project" value="Ensembl"/>
</dbReference>
<dbReference type="GO" id="GO:0001774">
    <property type="term" value="P:microglial cell activation"/>
    <property type="evidence" value="ECO:0007669"/>
    <property type="project" value="Ensembl"/>
</dbReference>
<dbReference type="GO" id="GO:0045892">
    <property type="term" value="P:negative regulation of DNA-templated transcription"/>
    <property type="evidence" value="ECO:0007669"/>
    <property type="project" value="Ensembl"/>
</dbReference>
<dbReference type="GO" id="GO:0032700">
    <property type="term" value="P:negative regulation of interleukin-17 production"/>
    <property type="evidence" value="ECO:0007669"/>
    <property type="project" value="Ensembl"/>
</dbReference>
<dbReference type="GO" id="GO:0048662">
    <property type="term" value="P:negative regulation of smooth muscle cell proliferation"/>
    <property type="evidence" value="ECO:0007669"/>
    <property type="project" value="Ensembl"/>
</dbReference>
<dbReference type="GO" id="GO:1902004">
    <property type="term" value="P:positive regulation of amyloid-beta formation"/>
    <property type="evidence" value="ECO:0007669"/>
    <property type="project" value="Ensembl"/>
</dbReference>
<dbReference type="GO" id="GO:0010508">
    <property type="term" value="P:positive regulation of autophagy"/>
    <property type="evidence" value="ECO:0007669"/>
    <property type="project" value="Ensembl"/>
</dbReference>
<dbReference type="GO" id="GO:0032834">
    <property type="term" value="P:positive regulation of CD4-positive, CD25-positive, alpha-beta regulatory T cell differentiation involved in immune response"/>
    <property type="evidence" value="ECO:0007669"/>
    <property type="project" value="Ensembl"/>
</dbReference>
<dbReference type="GO" id="GO:0032722">
    <property type="term" value="P:positive regulation of chemokine production"/>
    <property type="evidence" value="ECO:0007669"/>
    <property type="project" value="Ensembl"/>
</dbReference>
<dbReference type="GO" id="GO:0010634">
    <property type="term" value="P:positive regulation of epithelial cell migration"/>
    <property type="evidence" value="ECO:0007669"/>
    <property type="project" value="Ensembl"/>
</dbReference>
<dbReference type="GO" id="GO:0060552">
    <property type="term" value="P:positive regulation of fructose 1,6-bisphosphate metabolic process"/>
    <property type="evidence" value="ECO:0007669"/>
    <property type="project" value="Ensembl"/>
</dbReference>
<dbReference type="GO" id="GO:0050729">
    <property type="term" value="P:positive regulation of inflammatory response"/>
    <property type="evidence" value="ECO:0007669"/>
    <property type="project" value="Ensembl"/>
</dbReference>
<dbReference type="GO" id="GO:0032735">
    <property type="term" value="P:positive regulation of interleukin-12 production"/>
    <property type="evidence" value="ECO:0007669"/>
    <property type="project" value="Ensembl"/>
</dbReference>
<dbReference type="GO" id="GO:0032747">
    <property type="term" value="P:positive regulation of interleukin-23 production"/>
    <property type="evidence" value="ECO:0007669"/>
    <property type="project" value="Ensembl"/>
</dbReference>
<dbReference type="GO" id="GO:0032755">
    <property type="term" value="P:positive regulation of interleukin-6 production"/>
    <property type="evidence" value="ECO:0007669"/>
    <property type="project" value="Ensembl"/>
</dbReference>
<dbReference type="GO" id="GO:0051044">
    <property type="term" value="P:positive regulation of membrane protein ectodomain proteolysis"/>
    <property type="evidence" value="ECO:0007669"/>
    <property type="project" value="Ensembl"/>
</dbReference>
<dbReference type="GO" id="GO:0050769">
    <property type="term" value="P:positive regulation of neurogenesis"/>
    <property type="evidence" value="ECO:0007669"/>
    <property type="project" value="Ensembl"/>
</dbReference>
<dbReference type="GO" id="GO:0045429">
    <property type="term" value="P:positive regulation of nitric oxide biosynthetic process"/>
    <property type="evidence" value="ECO:0007669"/>
    <property type="project" value="Ensembl"/>
</dbReference>
<dbReference type="GO" id="GO:0045672">
    <property type="term" value="P:positive regulation of osteoclast differentiation"/>
    <property type="evidence" value="ECO:0007669"/>
    <property type="project" value="Ensembl"/>
</dbReference>
<dbReference type="GO" id="GO:0042307">
    <property type="term" value="P:positive regulation of protein import into nucleus"/>
    <property type="evidence" value="ECO:0007669"/>
    <property type="project" value="Ensembl"/>
</dbReference>
<dbReference type="GO" id="GO:0031334">
    <property type="term" value="P:positive regulation of protein-containing complex assembly"/>
    <property type="evidence" value="ECO:0007669"/>
    <property type="project" value="Ensembl"/>
</dbReference>
<dbReference type="GO" id="GO:0034393">
    <property type="term" value="P:positive regulation of smooth muscle cell apoptotic process"/>
    <property type="evidence" value="ECO:0007669"/>
    <property type="project" value="Ensembl"/>
</dbReference>
<dbReference type="GO" id="GO:2000309">
    <property type="term" value="P:positive regulation of tumor necrosis factor (ligand) superfamily member 11 production"/>
    <property type="evidence" value="ECO:0007669"/>
    <property type="project" value="Ensembl"/>
</dbReference>
<dbReference type="GO" id="GO:0060557">
    <property type="term" value="P:positive regulation of vitamin D biosynthetic process"/>
    <property type="evidence" value="ECO:0007669"/>
    <property type="project" value="Ensembl"/>
</dbReference>
<dbReference type="GO" id="GO:0050796">
    <property type="term" value="P:regulation of insulin secretion"/>
    <property type="evidence" value="ECO:0007669"/>
    <property type="project" value="Ensembl"/>
</dbReference>
<dbReference type="GO" id="GO:0060333">
    <property type="term" value="P:type II interferon-mediated signaling pathway"/>
    <property type="evidence" value="ECO:0007669"/>
    <property type="project" value="Ensembl"/>
</dbReference>
<dbReference type="GO" id="GO:0038196">
    <property type="term" value="P:type III interferon-mediated signaling pathway"/>
    <property type="evidence" value="ECO:0007669"/>
    <property type="project" value="Ensembl"/>
</dbReference>
<dbReference type="FunFam" id="1.20.1250.10:FF:000080">
    <property type="entry name" value="Interferon gamma"/>
    <property type="match status" value="1"/>
</dbReference>
<dbReference type="Gene3D" id="1.20.1250.10">
    <property type="match status" value="1"/>
</dbReference>
<dbReference type="InterPro" id="IPR009079">
    <property type="entry name" value="4_helix_cytokine-like_core"/>
</dbReference>
<dbReference type="InterPro" id="IPR002069">
    <property type="entry name" value="Interferon_gamma"/>
</dbReference>
<dbReference type="PANTHER" id="PTHR11419">
    <property type="entry name" value="INTERFERON GAMMA"/>
    <property type="match status" value="1"/>
</dbReference>
<dbReference type="PANTHER" id="PTHR11419:SF0">
    <property type="entry name" value="INTERFERON GAMMA"/>
    <property type="match status" value="1"/>
</dbReference>
<dbReference type="Pfam" id="PF00714">
    <property type="entry name" value="IFN-gamma"/>
    <property type="match status" value="1"/>
</dbReference>
<dbReference type="PIRSF" id="PIRSF001936">
    <property type="entry name" value="IFN-gamma"/>
    <property type="match status" value="1"/>
</dbReference>
<dbReference type="SUPFAM" id="SSF47266">
    <property type="entry name" value="4-helical cytokines"/>
    <property type="match status" value="1"/>
</dbReference>
<comment type="function">
    <text evidence="2 3">Type II interferon produced by immune cells such as T-cells and NK cells that plays crucial roles in antimicrobial, antiviral, and antitumor responses by activating effector immune cells and enhancing antigen presentation. Primarily signals through the JAK-STAT pathway after interaction with its receptor IFNGR1 to affect gene regulation. Upon IFNG binding, IFNGR1 intracellular domain opens out to allow association of downstream signaling components JAK2, JAK1 and STAT1, leading to STAT1 activation, nuclear translocation and transcription of IFNG-regulated genes. Many of the induced genes are transcription factors such as IRF1 that are able to further drive regulation of a next wave of transcription. Plays a role in class I antigen presentation pathway by inducing a replacement of catalytic proteasome subunits with immunoproteasome subunits. In turn, increases the quantity, quality, and repertoire of peptides for class I MHC loading. Increases the efficiency of peptide generation also by inducing the expression of activator PA28 that associates with the proteasome and alters its proteolytic cleavage preference. Up-regulates as well MHC II complexes on the cell surface by promoting expression of several key molecules such as cathepsins B/CTSB, H/CTSH, and L/CTSL (By similarity). Participates in the regulation of hematopoietic stem cells during development and under homeostatic conditions by affecting their development, quiescence, and differentiation (By similarity).</text>
</comment>
<comment type="subunit">
    <text evidence="2">Homodimer. Interacts with IFNGR1 (via extracellular domain); this interaction promotes IFNGR1 dimerization.</text>
</comment>
<comment type="subcellular location">
    <subcellularLocation>
        <location evidence="2">Secreted</location>
    </subcellularLocation>
</comment>
<comment type="tissue specificity">
    <text>Released primarily from activated T lymphocytes.</text>
</comment>
<comment type="similarity">
    <text evidence="4">Belongs to the type II (or gamma) interferon family.</text>
</comment>
<name>IFNG_SHEEP</name>
<accession>P17773</accession>
<accession>Q204I9</accession>
<keyword id="KW-0051">Antiviral defense</keyword>
<keyword id="KW-0202">Cytokine</keyword>
<keyword id="KW-0325">Glycoprotein</keyword>
<keyword id="KW-0341">Growth regulation</keyword>
<keyword id="KW-0873">Pyrrolidone carboxylic acid</keyword>
<keyword id="KW-1185">Reference proteome</keyword>
<keyword id="KW-0964">Secreted</keyword>
<keyword id="KW-0732">Signal</keyword>